<protein>
    <recommendedName>
        <fullName evidence="1">Small ribosomal subunit protein uS2c</fullName>
    </recommendedName>
    <alternativeName>
        <fullName>30S ribosomal protein S2, chloroplastic</fullName>
    </alternativeName>
</protein>
<sequence length="243" mass="27575">METSLSELLDASAHIGHSTSKWNPKFFPFIHMTKKGIHIIDLIKTIQQISVACMFLKKEVRNGKRVLFVGTKNQASKVVEREAKKCQEFYINQRWPGGLLTNWPTIKLSLKKLQLLEEKEKLDHLGSTSKKEEASMKREIQKLNKYLNGIKGMKKPPDIIILVDPSREKTTISECQKLNIPTIGILDTNCNPKSVNVPIPANDDSIKAIDLIVSKLSTSIFKAKLENNQFIENSTENLNEHVK</sequence>
<accession>Q9TM33</accession>
<evidence type="ECO:0000305" key="1"/>
<geneLocation type="chloroplast"/>
<gene>
    <name type="primary">rps2</name>
</gene>
<organism>
    <name type="scientific">Cyanidium caldarium</name>
    <name type="common">Red alga</name>
    <dbReference type="NCBI Taxonomy" id="2771"/>
    <lineage>
        <taxon>Eukaryota</taxon>
        <taxon>Rhodophyta</taxon>
        <taxon>Bangiophyceae</taxon>
        <taxon>Cyanidiales</taxon>
        <taxon>Cyanidiaceae</taxon>
        <taxon>Cyanidium</taxon>
    </lineage>
</organism>
<proteinExistence type="inferred from homology"/>
<name>RR2_CYACA</name>
<dbReference type="EMBL" id="AF022186">
    <property type="protein sequence ID" value="AAF13012.1"/>
    <property type="molecule type" value="Genomic_DNA"/>
</dbReference>
<dbReference type="RefSeq" id="NP_045034.1">
    <property type="nucleotide sequence ID" value="NC_001840.1"/>
</dbReference>
<dbReference type="SMR" id="Q9TM33"/>
<dbReference type="GeneID" id="800294"/>
<dbReference type="GO" id="GO:0009507">
    <property type="term" value="C:chloroplast"/>
    <property type="evidence" value="ECO:0007669"/>
    <property type="project" value="UniProtKB-SubCell"/>
</dbReference>
<dbReference type="GO" id="GO:0005763">
    <property type="term" value="C:mitochondrial small ribosomal subunit"/>
    <property type="evidence" value="ECO:0007669"/>
    <property type="project" value="TreeGrafter"/>
</dbReference>
<dbReference type="GO" id="GO:0003735">
    <property type="term" value="F:structural constituent of ribosome"/>
    <property type="evidence" value="ECO:0007669"/>
    <property type="project" value="InterPro"/>
</dbReference>
<dbReference type="GO" id="GO:0006412">
    <property type="term" value="P:translation"/>
    <property type="evidence" value="ECO:0007669"/>
    <property type="project" value="UniProtKB-UniRule"/>
</dbReference>
<dbReference type="CDD" id="cd01425">
    <property type="entry name" value="RPS2"/>
    <property type="match status" value="1"/>
</dbReference>
<dbReference type="Gene3D" id="3.40.50.10490">
    <property type="entry name" value="Glucose-6-phosphate isomerase like protein, domain 1"/>
    <property type="match status" value="1"/>
</dbReference>
<dbReference type="Gene3D" id="1.10.287.610">
    <property type="entry name" value="Helix hairpin bin"/>
    <property type="match status" value="1"/>
</dbReference>
<dbReference type="HAMAP" id="MF_00291_B">
    <property type="entry name" value="Ribosomal_uS2_B"/>
    <property type="match status" value="1"/>
</dbReference>
<dbReference type="InterPro" id="IPR001865">
    <property type="entry name" value="Ribosomal_uS2"/>
</dbReference>
<dbReference type="InterPro" id="IPR005706">
    <property type="entry name" value="Ribosomal_uS2_bac/mit/plastid"/>
</dbReference>
<dbReference type="InterPro" id="IPR018130">
    <property type="entry name" value="Ribosomal_uS2_CS"/>
</dbReference>
<dbReference type="InterPro" id="IPR023591">
    <property type="entry name" value="Ribosomal_uS2_flav_dom_sf"/>
</dbReference>
<dbReference type="NCBIfam" id="TIGR01011">
    <property type="entry name" value="rpsB_bact"/>
    <property type="match status" value="1"/>
</dbReference>
<dbReference type="PANTHER" id="PTHR12534">
    <property type="entry name" value="30S RIBOSOMAL PROTEIN S2 PROKARYOTIC AND ORGANELLAR"/>
    <property type="match status" value="1"/>
</dbReference>
<dbReference type="PANTHER" id="PTHR12534:SF0">
    <property type="entry name" value="SMALL RIBOSOMAL SUBUNIT PROTEIN US2M"/>
    <property type="match status" value="1"/>
</dbReference>
<dbReference type="Pfam" id="PF00318">
    <property type="entry name" value="Ribosomal_S2"/>
    <property type="match status" value="1"/>
</dbReference>
<dbReference type="PRINTS" id="PR00395">
    <property type="entry name" value="RIBOSOMALS2"/>
</dbReference>
<dbReference type="SUPFAM" id="SSF52313">
    <property type="entry name" value="Ribosomal protein S2"/>
    <property type="match status" value="1"/>
</dbReference>
<dbReference type="PROSITE" id="PS00962">
    <property type="entry name" value="RIBOSOMAL_S2_1"/>
    <property type="match status" value="1"/>
</dbReference>
<dbReference type="PROSITE" id="PS00963">
    <property type="entry name" value="RIBOSOMAL_S2_2"/>
    <property type="match status" value="1"/>
</dbReference>
<comment type="subcellular location">
    <subcellularLocation>
        <location>Plastid</location>
        <location>Chloroplast</location>
    </subcellularLocation>
</comment>
<comment type="similarity">
    <text evidence="1">Belongs to the universal ribosomal protein uS2 family.</text>
</comment>
<reference key="1">
    <citation type="journal article" date="2000" name="J. Mol. Evol.">
        <title>The structure and gene repertoire of an ancient red algal plastid genome.</title>
        <authorList>
            <person name="Gloeckner G."/>
            <person name="Rosenthal A."/>
            <person name="Valentin K.-U."/>
        </authorList>
    </citation>
    <scope>NUCLEOTIDE SEQUENCE [LARGE SCALE GENOMIC DNA]</scope>
    <source>
        <strain>RK-1</strain>
    </source>
</reference>
<keyword id="KW-0150">Chloroplast</keyword>
<keyword id="KW-0934">Plastid</keyword>
<keyword id="KW-0687">Ribonucleoprotein</keyword>
<keyword id="KW-0689">Ribosomal protein</keyword>
<feature type="chain" id="PRO_0000134295" description="Small ribosomal subunit protein uS2c">
    <location>
        <begin position="1"/>
        <end position="243"/>
    </location>
</feature>